<feature type="chain" id="PRO_0000060168" description="Peptide transport system permease protein SapC">
    <location>
        <begin position="1"/>
        <end position="295"/>
    </location>
</feature>
<feature type="transmembrane region" description="Helical" evidence="2">
    <location>
        <begin position="27"/>
        <end position="47"/>
    </location>
</feature>
<feature type="transmembrane region" description="Helical" evidence="2">
    <location>
        <begin position="102"/>
        <end position="122"/>
    </location>
</feature>
<feature type="transmembrane region" description="Helical" evidence="2">
    <location>
        <begin position="129"/>
        <end position="149"/>
    </location>
</feature>
<feature type="transmembrane region" description="Helical" evidence="2">
    <location>
        <begin position="157"/>
        <end position="177"/>
    </location>
</feature>
<feature type="transmembrane region" description="Helical" evidence="2">
    <location>
        <begin position="219"/>
        <end position="239"/>
    </location>
</feature>
<feature type="transmembrane region" description="Helical" evidence="2">
    <location>
        <begin position="262"/>
        <end position="282"/>
    </location>
</feature>
<feature type="domain" description="ABC transmembrane type-1" evidence="2">
    <location>
        <begin position="98"/>
        <end position="278"/>
    </location>
</feature>
<gene>
    <name type="primary">sapC</name>
    <name type="ordered locus">HI_1640</name>
</gene>
<proteinExistence type="inferred from homology"/>
<accession>P45287</accession>
<sequence>MQNKEPDEFRESTSIFQIWLRFRQNTIALFSFYLLIALIFTALFASYLAPYADNRQFIGQELMPPSWVDRGKIAFFFGTDDLGRDILSRLIMGTRYTLGSALLVVFSVAIIGGALGIIAGLLKGIKARFVGHIFDAFLSLPILLIAVVISTLMEPSLWNAMFATLLAILPYFIHTIYRAIQKELEKDYVVMLKLEGISNQALLKSTILPNITVIYIQEVARAFVIAVLDISALSFISLGAQRPTPEWGAMIKDSLELLYLAPWTVLLPGFAIIFTILLSIIFSNGLTKAINQHQE</sequence>
<keyword id="KW-0997">Cell inner membrane</keyword>
<keyword id="KW-1003">Cell membrane</keyword>
<keyword id="KW-0472">Membrane</keyword>
<keyword id="KW-0571">Peptide transport</keyword>
<keyword id="KW-0653">Protein transport</keyword>
<keyword id="KW-1185">Reference proteome</keyword>
<keyword id="KW-0812">Transmembrane</keyword>
<keyword id="KW-1133">Transmembrane helix</keyword>
<keyword id="KW-0813">Transport</keyword>
<comment type="function">
    <text evidence="1">Involved in a peptide intake transport system that plays a role in the resistance to antimicrobial peptides.</text>
</comment>
<comment type="subcellular location">
    <subcellularLocation>
        <location evidence="1">Cell inner membrane</location>
        <topology evidence="2">Multi-pass membrane protein</topology>
    </subcellularLocation>
</comment>
<comment type="similarity">
    <text evidence="3">Belongs to the binding-protein-dependent transport system permease family. OppBC subfamily.</text>
</comment>
<protein>
    <recommendedName>
        <fullName>Peptide transport system permease protein SapC</fullName>
    </recommendedName>
</protein>
<name>SAPC_HAEIN</name>
<dbReference type="EMBL" id="L42023">
    <property type="protein sequence ID" value="AAC23287.1"/>
    <property type="molecule type" value="Genomic_DNA"/>
</dbReference>
<dbReference type="PIR" id="C64134">
    <property type="entry name" value="C64134"/>
</dbReference>
<dbReference type="RefSeq" id="NP_439782.1">
    <property type="nucleotide sequence ID" value="NC_000907.1"/>
</dbReference>
<dbReference type="SMR" id="P45287"/>
<dbReference type="STRING" id="71421.HI_1640"/>
<dbReference type="EnsemblBacteria" id="AAC23287">
    <property type="protein sequence ID" value="AAC23287"/>
    <property type="gene ID" value="HI_1640"/>
</dbReference>
<dbReference type="KEGG" id="hin:HI_1640"/>
<dbReference type="PATRIC" id="fig|71421.8.peg.1716"/>
<dbReference type="eggNOG" id="COG4171">
    <property type="taxonomic scope" value="Bacteria"/>
</dbReference>
<dbReference type="HOGENOM" id="CLU_028518_5_3_6"/>
<dbReference type="OrthoDB" id="9805884at2"/>
<dbReference type="PhylomeDB" id="P45287"/>
<dbReference type="BioCyc" id="HINF71421:G1GJ1-1657-MONOMER"/>
<dbReference type="Proteomes" id="UP000000579">
    <property type="component" value="Chromosome"/>
</dbReference>
<dbReference type="GO" id="GO:0005886">
    <property type="term" value="C:plasma membrane"/>
    <property type="evidence" value="ECO:0000318"/>
    <property type="project" value="GO_Central"/>
</dbReference>
<dbReference type="GO" id="GO:0015489">
    <property type="term" value="F:putrescine transmembrane transporter activity"/>
    <property type="evidence" value="ECO:0000318"/>
    <property type="project" value="GO_Central"/>
</dbReference>
<dbReference type="GO" id="GO:0015833">
    <property type="term" value="P:peptide transport"/>
    <property type="evidence" value="ECO:0007669"/>
    <property type="project" value="UniProtKB-KW"/>
</dbReference>
<dbReference type="GO" id="GO:0015031">
    <property type="term" value="P:protein transport"/>
    <property type="evidence" value="ECO:0007669"/>
    <property type="project" value="UniProtKB-KW"/>
</dbReference>
<dbReference type="CDD" id="cd06261">
    <property type="entry name" value="TM_PBP2"/>
    <property type="match status" value="1"/>
</dbReference>
<dbReference type="InterPro" id="IPR050366">
    <property type="entry name" value="BP-dependent_transpt_permease"/>
</dbReference>
<dbReference type="InterPro" id="IPR000515">
    <property type="entry name" value="MetI-like"/>
</dbReference>
<dbReference type="InterPro" id="IPR035906">
    <property type="entry name" value="MetI-like_sf"/>
</dbReference>
<dbReference type="InterPro" id="IPR025966">
    <property type="entry name" value="OppC_N"/>
</dbReference>
<dbReference type="PANTHER" id="PTHR43386">
    <property type="entry name" value="OLIGOPEPTIDE TRANSPORT SYSTEM PERMEASE PROTEIN APPC"/>
    <property type="match status" value="1"/>
</dbReference>
<dbReference type="PANTHER" id="PTHR43386:SF5">
    <property type="entry name" value="PUTRESCINE EXPORT SYSTEM PERMEASE PROTEIN SAPC"/>
    <property type="match status" value="1"/>
</dbReference>
<dbReference type="Pfam" id="PF00528">
    <property type="entry name" value="BPD_transp_1"/>
    <property type="match status" value="1"/>
</dbReference>
<dbReference type="Pfam" id="PF12911">
    <property type="entry name" value="OppC_N"/>
    <property type="match status" value="1"/>
</dbReference>
<dbReference type="SUPFAM" id="SSF161098">
    <property type="entry name" value="MetI-like"/>
    <property type="match status" value="1"/>
</dbReference>
<dbReference type="PROSITE" id="PS50928">
    <property type="entry name" value="ABC_TM1"/>
    <property type="match status" value="1"/>
</dbReference>
<reference key="1">
    <citation type="journal article" date="1995" name="Science">
        <title>Whole-genome random sequencing and assembly of Haemophilus influenzae Rd.</title>
        <authorList>
            <person name="Fleischmann R.D."/>
            <person name="Adams M.D."/>
            <person name="White O."/>
            <person name="Clayton R.A."/>
            <person name="Kirkness E.F."/>
            <person name="Kerlavage A.R."/>
            <person name="Bult C.J."/>
            <person name="Tomb J.-F."/>
            <person name="Dougherty B.A."/>
            <person name="Merrick J.M."/>
            <person name="McKenney K."/>
            <person name="Sutton G.G."/>
            <person name="FitzHugh W."/>
            <person name="Fields C.A."/>
            <person name="Gocayne J.D."/>
            <person name="Scott J.D."/>
            <person name="Shirley R."/>
            <person name="Liu L.-I."/>
            <person name="Glodek A."/>
            <person name="Kelley J.M."/>
            <person name="Weidman J.F."/>
            <person name="Phillips C.A."/>
            <person name="Spriggs T."/>
            <person name="Hedblom E."/>
            <person name="Cotton M.D."/>
            <person name="Utterback T.R."/>
            <person name="Hanna M.C."/>
            <person name="Nguyen D.T."/>
            <person name="Saudek D.M."/>
            <person name="Brandon R.C."/>
            <person name="Fine L.D."/>
            <person name="Fritchman J.L."/>
            <person name="Fuhrmann J.L."/>
            <person name="Geoghagen N.S.M."/>
            <person name="Gnehm C.L."/>
            <person name="McDonald L.A."/>
            <person name="Small K.V."/>
            <person name="Fraser C.M."/>
            <person name="Smith H.O."/>
            <person name="Venter J.C."/>
        </authorList>
    </citation>
    <scope>NUCLEOTIDE SEQUENCE [LARGE SCALE GENOMIC DNA]</scope>
    <source>
        <strain>ATCC 51907 / DSM 11121 / KW20 / Rd</strain>
    </source>
</reference>
<evidence type="ECO:0000250" key="1"/>
<evidence type="ECO:0000255" key="2">
    <source>
        <dbReference type="PROSITE-ProRule" id="PRU00441"/>
    </source>
</evidence>
<evidence type="ECO:0000305" key="3"/>
<organism>
    <name type="scientific">Haemophilus influenzae (strain ATCC 51907 / DSM 11121 / KW20 / Rd)</name>
    <dbReference type="NCBI Taxonomy" id="71421"/>
    <lineage>
        <taxon>Bacteria</taxon>
        <taxon>Pseudomonadati</taxon>
        <taxon>Pseudomonadota</taxon>
        <taxon>Gammaproteobacteria</taxon>
        <taxon>Pasteurellales</taxon>
        <taxon>Pasteurellaceae</taxon>
        <taxon>Haemophilus</taxon>
    </lineage>
</organism>